<sequence>MSDAATRTEGTSGGHSSSAVGLMVGAVGVCYGDIGTSPLYTLKEVFIGGYGVQANHDGVLGVLSLIFWSLIWVVSIKYVIFVLRADNQGEGGVMALSALARRAAAPFGRLQTFVVVAGLIGAALFYGDSMITPAISVLSAVEGLEIAFDGLEHWTVPLALIVLIGLFLIQKHGTARIGILFGPVMVLWFGALAALGVYGVIQQPEVLQAMNPVWAVRFFGSHPGIGVAILGATVLALTGAEALYADMGHFGRKPIARAWFLLVLPALVLNYFGQGATILSNAEAARNPFYLLAPGWALLPMVALSTLATVIASQAVISGAFSLTRQAIQLGYVPRMSIQHTSSHEQGQIYIGGVNWALMVGVVLLVLGFESSASLAAAYGVAVTGTMLITTLLMGVVIWRLWKWPLWLGVPFFCVMLAVDSLFFAANVPKVVQGGAFPVIAGIVIFILMSTWKRGRQLLVERLDEGSLPLPVFISSMRVQPPHRVQGTAIFLTARTDAVPHALLHNLLHNQVLHEQVVLLTVVNEDSPRVAPDRRFEVEAYGDGFFRVILHFGFMEEPDIPGALRLCHLNELDFSPMRTTYFLSRETVIPSRRIGMARWREGLFAFLLKNANGNLRYFNLPLNRVIELGTQVEI</sequence>
<feature type="chain" id="PRO_0000315988" description="Probable potassium transport system protein Kup">
    <location>
        <begin position="1"/>
        <end position="634"/>
    </location>
</feature>
<feature type="transmembrane region" description="Helical" evidence="1">
    <location>
        <begin position="19"/>
        <end position="39"/>
    </location>
</feature>
<feature type="transmembrane region" description="Helical" evidence="1">
    <location>
        <begin position="62"/>
        <end position="82"/>
    </location>
</feature>
<feature type="transmembrane region" description="Helical" evidence="1">
    <location>
        <begin position="113"/>
        <end position="133"/>
    </location>
</feature>
<feature type="transmembrane region" description="Helical" evidence="1">
    <location>
        <begin position="150"/>
        <end position="170"/>
    </location>
</feature>
<feature type="transmembrane region" description="Helical" evidence="1">
    <location>
        <begin position="177"/>
        <end position="197"/>
    </location>
</feature>
<feature type="transmembrane region" description="Helical" evidence="1">
    <location>
        <begin position="225"/>
        <end position="245"/>
    </location>
</feature>
<feature type="transmembrane region" description="Helical" evidence="1">
    <location>
        <begin position="259"/>
        <end position="279"/>
    </location>
</feature>
<feature type="transmembrane region" description="Helical" evidence="1">
    <location>
        <begin position="291"/>
        <end position="311"/>
    </location>
</feature>
<feature type="transmembrane region" description="Helical" evidence="1">
    <location>
        <begin position="349"/>
        <end position="369"/>
    </location>
</feature>
<feature type="transmembrane region" description="Helical" evidence="1">
    <location>
        <begin position="379"/>
        <end position="399"/>
    </location>
</feature>
<feature type="transmembrane region" description="Helical" evidence="1">
    <location>
        <begin position="406"/>
        <end position="426"/>
    </location>
</feature>
<feature type="transmembrane region" description="Helical" evidence="1">
    <location>
        <begin position="431"/>
        <end position="451"/>
    </location>
</feature>
<keyword id="KW-0997">Cell inner membrane</keyword>
<keyword id="KW-1003">Cell membrane</keyword>
<keyword id="KW-0406">Ion transport</keyword>
<keyword id="KW-0472">Membrane</keyword>
<keyword id="KW-0630">Potassium</keyword>
<keyword id="KW-0633">Potassium transport</keyword>
<keyword id="KW-0769">Symport</keyword>
<keyword id="KW-0812">Transmembrane</keyword>
<keyword id="KW-1133">Transmembrane helix</keyword>
<keyword id="KW-0813">Transport</keyword>
<accession>A6VA56</accession>
<proteinExistence type="inferred from homology"/>
<organism>
    <name type="scientific">Pseudomonas paraeruginosa (strain DSM 24068 / PA7)</name>
    <name type="common">Pseudomonas aeruginosa (strain PA7)</name>
    <dbReference type="NCBI Taxonomy" id="381754"/>
    <lineage>
        <taxon>Bacteria</taxon>
        <taxon>Pseudomonadati</taxon>
        <taxon>Pseudomonadota</taxon>
        <taxon>Gammaproteobacteria</taxon>
        <taxon>Pseudomonadales</taxon>
        <taxon>Pseudomonadaceae</taxon>
        <taxon>Pseudomonas</taxon>
        <taxon>Pseudomonas paraeruginosa</taxon>
    </lineage>
</organism>
<dbReference type="EMBL" id="CP000744">
    <property type="protein sequence ID" value="ABR81370.1"/>
    <property type="molecule type" value="Genomic_DNA"/>
</dbReference>
<dbReference type="RefSeq" id="WP_012076923.1">
    <property type="nucleotide sequence ID" value="NC_009656.1"/>
</dbReference>
<dbReference type="SMR" id="A6VA56"/>
<dbReference type="KEGG" id="pap:PSPA7_4594"/>
<dbReference type="HOGENOM" id="CLU_008142_4_2_6"/>
<dbReference type="Proteomes" id="UP000001582">
    <property type="component" value="Chromosome"/>
</dbReference>
<dbReference type="GO" id="GO:0005886">
    <property type="term" value="C:plasma membrane"/>
    <property type="evidence" value="ECO:0007669"/>
    <property type="project" value="UniProtKB-SubCell"/>
</dbReference>
<dbReference type="GO" id="GO:0015079">
    <property type="term" value="F:potassium ion transmembrane transporter activity"/>
    <property type="evidence" value="ECO:0007669"/>
    <property type="project" value="UniProtKB-UniRule"/>
</dbReference>
<dbReference type="GO" id="GO:0015293">
    <property type="term" value="F:symporter activity"/>
    <property type="evidence" value="ECO:0007669"/>
    <property type="project" value="UniProtKB-UniRule"/>
</dbReference>
<dbReference type="HAMAP" id="MF_01522">
    <property type="entry name" value="Kup"/>
    <property type="match status" value="1"/>
</dbReference>
<dbReference type="InterPro" id="IPR003855">
    <property type="entry name" value="K+_transporter"/>
</dbReference>
<dbReference type="InterPro" id="IPR053952">
    <property type="entry name" value="K_trans_C"/>
</dbReference>
<dbReference type="InterPro" id="IPR053951">
    <property type="entry name" value="K_trans_N"/>
</dbReference>
<dbReference type="InterPro" id="IPR023051">
    <property type="entry name" value="Kup"/>
</dbReference>
<dbReference type="PANTHER" id="PTHR30540:SF79">
    <property type="entry name" value="LOW AFFINITY POTASSIUM TRANSPORT SYSTEM PROTEIN KUP"/>
    <property type="match status" value="1"/>
</dbReference>
<dbReference type="PANTHER" id="PTHR30540">
    <property type="entry name" value="OSMOTIC STRESS POTASSIUM TRANSPORTER"/>
    <property type="match status" value="1"/>
</dbReference>
<dbReference type="Pfam" id="PF02705">
    <property type="entry name" value="K_trans"/>
    <property type="match status" value="1"/>
</dbReference>
<dbReference type="Pfam" id="PF22776">
    <property type="entry name" value="K_trans_C"/>
    <property type="match status" value="1"/>
</dbReference>
<name>KUP_PSEP7</name>
<gene>
    <name evidence="1" type="primary">kup</name>
    <name type="ordered locus">PSPA7_4594</name>
</gene>
<reference key="1">
    <citation type="submission" date="2007-06" db="EMBL/GenBank/DDBJ databases">
        <authorList>
            <person name="Dodson R.J."/>
            <person name="Harkins D."/>
            <person name="Paulsen I.T."/>
        </authorList>
    </citation>
    <scope>NUCLEOTIDE SEQUENCE [LARGE SCALE GENOMIC DNA]</scope>
    <source>
        <strain>DSM 24068 / PA7</strain>
    </source>
</reference>
<evidence type="ECO:0000255" key="1">
    <source>
        <dbReference type="HAMAP-Rule" id="MF_01522"/>
    </source>
</evidence>
<protein>
    <recommendedName>
        <fullName evidence="1">Probable potassium transport system protein Kup</fullName>
    </recommendedName>
</protein>
<comment type="function">
    <text evidence="1">Transport of potassium into the cell. Likely operates as a K(+):H(+) symporter.</text>
</comment>
<comment type="catalytic activity">
    <reaction evidence="1">
        <text>K(+)(in) + H(+)(in) = K(+)(out) + H(+)(out)</text>
        <dbReference type="Rhea" id="RHEA:28490"/>
        <dbReference type="ChEBI" id="CHEBI:15378"/>
        <dbReference type="ChEBI" id="CHEBI:29103"/>
    </reaction>
    <physiologicalReaction direction="right-to-left" evidence="1">
        <dbReference type="Rhea" id="RHEA:28492"/>
    </physiologicalReaction>
</comment>
<comment type="subcellular location">
    <subcellularLocation>
        <location evidence="1">Cell inner membrane</location>
        <topology evidence="1">Multi-pass membrane protein</topology>
    </subcellularLocation>
</comment>
<comment type="similarity">
    <text evidence="1">Belongs to the HAK/KUP transporter (TC 2.A.72) family.</text>
</comment>